<gene>
    <name type="primary">ftsN</name>
    <name type="ordered locus">CCNA_02086</name>
</gene>
<proteinExistence type="evidence at protein level"/>
<protein>
    <recommendedName>
        <fullName>Cell division protein FtsN</fullName>
    </recommendedName>
</protein>
<comment type="function">
    <text evidence="3">Essential cell division protein.</text>
</comment>
<comment type="subunit">
    <text evidence="4">Interacts with FtsI, FtsW and the cell division inhibitor SidA.</text>
</comment>
<comment type="subcellular location">
    <subcellularLocation>
        <location evidence="3">Cell inner membrane</location>
        <topology evidence="3">Single-pass membrane protein</topology>
    </subcellularLocation>
    <text>Recruited to the divisome after cell division initiates and remains associated with the new poles after cytokinesis is finished. Localization is dependent on FtsZ.</text>
</comment>
<comment type="domain">
    <text evidence="3">The SPOR domain is dispensable for cell division, but it consolidates the position of FtsN at the cell division site and the cell pole.</text>
</comment>
<feature type="chain" id="PRO_0000420270" description="Cell division protein FtsN">
    <location>
        <begin position="1"/>
        <end position="266"/>
    </location>
</feature>
<feature type="topological domain" description="Cytoplasmic" evidence="1">
    <location>
        <begin position="1"/>
        <end position="32"/>
    </location>
</feature>
<feature type="transmembrane region" description="Helical" evidence="1">
    <location>
        <begin position="33"/>
        <end position="53"/>
    </location>
</feature>
<feature type="topological domain" description="Periplasmic" evidence="1">
    <location>
        <begin position="54"/>
        <end position="266"/>
    </location>
</feature>
<feature type="domain" description="SPOR">
    <location>
        <begin position="184"/>
        <end position="266"/>
    </location>
</feature>
<feature type="region of interest" description="Disordered" evidence="2">
    <location>
        <begin position="1"/>
        <end position="21"/>
    </location>
</feature>
<feature type="region of interest" description="Disordered" evidence="2">
    <location>
        <begin position="71"/>
        <end position="136"/>
    </location>
</feature>
<feature type="compositionally biased region" description="Low complexity" evidence="2">
    <location>
        <begin position="112"/>
        <end position="136"/>
    </location>
</feature>
<reference key="1">
    <citation type="journal article" date="2010" name="J. Bacteriol.">
        <title>The genetic basis of laboratory adaptation in Caulobacter crescentus.</title>
        <authorList>
            <person name="Marks M.E."/>
            <person name="Castro-Rojas C.M."/>
            <person name="Teiling C."/>
            <person name="Du L."/>
            <person name="Kapatral V."/>
            <person name="Walunas T.L."/>
            <person name="Crosson S."/>
        </authorList>
    </citation>
    <scope>NUCLEOTIDE SEQUENCE [LARGE SCALE GENOMIC DNA]</scope>
    <source>
        <strain>NA1000 / CB15N</strain>
    </source>
</reference>
<reference key="2">
    <citation type="journal article" date="2009" name="Mol. Microbiol.">
        <title>FtsN-like proteins are conserved components of the cell division machinery in proteobacteria.</title>
        <authorList>
            <person name="Moll A."/>
            <person name="Thanbichler M."/>
        </authorList>
    </citation>
    <scope>FUNCTION</scope>
    <scope>SUBCELLULAR LOCATION</scope>
    <scope>TOPOLOGY</scope>
    <scope>DOMAIN</scope>
    <source>
        <strain>NA1000 / CB15N</strain>
    </source>
</reference>
<reference key="3">
    <citation type="journal article" date="2011" name="Genes Dev.">
        <title>A DNA damage checkpoint in Caulobacter crescentus inhibits cell division through a direct interaction with FtsW.</title>
        <authorList>
            <person name="Modell J.W."/>
            <person name="Hopkins A.C."/>
            <person name="Laub M.T."/>
        </authorList>
    </citation>
    <scope>INTERACTION WITH FTSI; FTSW AND SIDA</scope>
    <source>
        <strain>NA1000 / CB15N</strain>
    </source>
</reference>
<evidence type="ECO:0000255" key="1"/>
<evidence type="ECO:0000256" key="2">
    <source>
        <dbReference type="SAM" id="MobiDB-lite"/>
    </source>
</evidence>
<evidence type="ECO:0000269" key="3">
    <source>
    </source>
</evidence>
<evidence type="ECO:0000269" key="4">
    <source>
    </source>
</evidence>
<keyword id="KW-0131">Cell cycle</keyword>
<keyword id="KW-0132">Cell division</keyword>
<keyword id="KW-0997">Cell inner membrane</keyword>
<keyword id="KW-1003">Cell membrane</keyword>
<keyword id="KW-0472">Membrane</keyword>
<keyword id="KW-1185">Reference proteome</keyword>
<keyword id="KW-0812">Transmembrane</keyword>
<keyword id="KW-1133">Transmembrane helix</keyword>
<organism>
    <name type="scientific">Caulobacter vibrioides (strain NA1000 / CB15N)</name>
    <name type="common">Caulobacter crescentus</name>
    <dbReference type="NCBI Taxonomy" id="565050"/>
    <lineage>
        <taxon>Bacteria</taxon>
        <taxon>Pseudomonadati</taxon>
        <taxon>Pseudomonadota</taxon>
        <taxon>Alphaproteobacteria</taxon>
        <taxon>Caulobacterales</taxon>
        <taxon>Caulobacteraceae</taxon>
        <taxon>Caulobacter</taxon>
    </lineage>
</organism>
<name>FTSN_CAUVN</name>
<accession>B8GX61</accession>
<dbReference type="EMBL" id="CP001340">
    <property type="protein sequence ID" value="ACL95551.1"/>
    <property type="molecule type" value="Genomic_DNA"/>
</dbReference>
<dbReference type="RefSeq" id="WP_010919873.1">
    <property type="nucleotide sequence ID" value="NC_011916.1"/>
</dbReference>
<dbReference type="RefSeq" id="YP_002517459.1">
    <property type="nucleotide sequence ID" value="NC_011916.1"/>
</dbReference>
<dbReference type="SMR" id="B8GX61"/>
<dbReference type="DIP" id="DIP-61065N"/>
<dbReference type="IntAct" id="B8GX61">
    <property type="interactions" value="3"/>
</dbReference>
<dbReference type="GeneID" id="7330392"/>
<dbReference type="KEGG" id="ccs:CCNA_02086"/>
<dbReference type="PATRIC" id="fig|565050.3.peg.2044"/>
<dbReference type="HOGENOM" id="CLU_1048341_0_0_5"/>
<dbReference type="OrthoDB" id="8479416at2"/>
<dbReference type="Proteomes" id="UP000001364">
    <property type="component" value="Chromosome"/>
</dbReference>
<dbReference type="GO" id="GO:0005886">
    <property type="term" value="C:plasma membrane"/>
    <property type="evidence" value="ECO:0007669"/>
    <property type="project" value="UniProtKB-SubCell"/>
</dbReference>
<dbReference type="GO" id="GO:0042834">
    <property type="term" value="F:peptidoglycan binding"/>
    <property type="evidence" value="ECO:0007669"/>
    <property type="project" value="InterPro"/>
</dbReference>
<dbReference type="GO" id="GO:0051301">
    <property type="term" value="P:cell division"/>
    <property type="evidence" value="ECO:0007669"/>
    <property type="project" value="UniProtKB-KW"/>
</dbReference>
<dbReference type="Gene3D" id="3.30.70.1070">
    <property type="entry name" value="Sporulation related repeat"/>
    <property type="match status" value="1"/>
</dbReference>
<dbReference type="InterPro" id="IPR007730">
    <property type="entry name" value="SPOR-like_dom"/>
</dbReference>
<dbReference type="InterPro" id="IPR036680">
    <property type="entry name" value="SPOR-like_sf"/>
</dbReference>
<dbReference type="Pfam" id="PF05036">
    <property type="entry name" value="SPOR"/>
    <property type="match status" value="1"/>
</dbReference>
<dbReference type="SUPFAM" id="SSF110997">
    <property type="entry name" value="Sporulation related repeat"/>
    <property type="match status" value="1"/>
</dbReference>
<dbReference type="PROSITE" id="PS51724">
    <property type="entry name" value="SPOR"/>
    <property type="match status" value="1"/>
</dbReference>
<sequence length="266" mass="26870">MSDPHRGAYTPPTDAPLSFDARQPVRGARPLPMTLIISAVVLVTLVVAVVMIYRDGVRGPNDAPQAVGTEVAQMKTPPAESSQPKDPASGLQIYHNEEPQPSATFAAPPETPLARPVAPTATTPVETASLPAAKPAAPAPTIESLATAAAAQKPAPKPVQVAQAAPKPVAAAPATTATAPKPAAVSTGPASVQIGALSSPALADKAWAEAVRLAPGLAAGKGKKVETVDKNGTTLYRTSVTGFATREAAKAFCEAIAASGKSCFVK</sequence>